<reference key="1">
    <citation type="journal article" date="2008" name="PLoS Genet.">
        <title>Complete genome sequence of the complex carbohydrate-degrading marine bacterium, Saccharophagus degradans strain 2-40 T.</title>
        <authorList>
            <person name="Weiner R.M."/>
            <person name="Taylor L.E. II"/>
            <person name="Henrissat B."/>
            <person name="Hauser L."/>
            <person name="Land M."/>
            <person name="Coutinho P.M."/>
            <person name="Rancurel C."/>
            <person name="Saunders E.H."/>
            <person name="Longmire A.G."/>
            <person name="Zhang H."/>
            <person name="Bayer E.A."/>
            <person name="Gilbert H.J."/>
            <person name="Larimer F."/>
            <person name="Zhulin I.B."/>
            <person name="Ekborg N.A."/>
            <person name="Lamed R."/>
            <person name="Richardson P.M."/>
            <person name="Borovok I."/>
            <person name="Hutcheson S."/>
        </authorList>
    </citation>
    <scope>NUCLEOTIDE SEQUENCE [LARGE SCALE GENOMIC DNA]</scope>
    <source>
        <strain>2-40 / ATCC 43961 / DSM 17024</strain>
    </source>
</reference>
<organism>
    <name type="scientific">Saccharophagus degradans (strain 2-40 / ATCC 43961 / DSM 17024)</name>
    <dbReference type="NCBI Taxonomy" id="203122"/>
    <lineage>
        <taxon>Bacteria</taxon>
        <taxon>Pseudomonadati</taxon>
        <taxon>Pseudomonadota</taxon>
        <taxon>Gammaproteobacteria</taxon>
        <taxon>Cellvibrionales</taxon>
        <taxon>Cellvibrionaceae</taxon>
        <taxon>Saccharophagus</taxon>
    </lineage>
</organism>
<comment type="function">
    <text evidence="1">Catalyzes the methyl esterification of L-isoaspartyl residues in peptides and proteins that result from spontaneous decomposition of normal L-aspartyl and L-asparaginyl residues. It plays a role in the repair and/or degradation of damaged proteins.</text>
</comment>
<comment type="catalytic activity">
    <reaction evidence="1">
        <text>[protein]-L-isoaspartate + S-adenosyl-L-methionine = [protein]-L-isoaspartate alpha-methyl ester + S-adenosyl-L-homocysteine</text>
        <dbReference type="Rhea" id="RHEA:12705"/>
        <dbReference type="Rhea" id="RHEA-COMP:12143"/>
        <dbReference type="Rhea" id="RHEA-COMP:12144"/>
        <dbReference type="ChEBI" id="CHEBI:57856"/>
        <dbReference type="ChEBI" id="CHEBI:59789"/>
        <dbReference type="ChEBI" id="CHEBI:90596"/>
        <dbReference type="ChEBI" id="CHEBI:90598"/>
        <dbReference type="EC" id="2.1.1.77"/>
    </reaction>
</comment>
<comment type="subcellular location">
    <subcellularLocation>
        <location evidence="1">Cytoplasm</location>
    </subcellularLocation>
</comment>
<comment type="similarity">
    <text evidence="1">Belongs to the methyltransferase superfamily. L-isoaspartyl/D-aspartyl protein methyltransferase family.</text>
</comment>
<gene>
    <name evidence="1" type="primary">pcm</name>
    <name type="ordered locus">Sde_1250</name>
</gene>
<protein>
    <recommendedName>
        <fullName evidence="1">Protein-L-isoaspartate O-methyltransferase</fullName>
        <ecNumber evidence="1">2.1.1.77</ecNumber>
    </recommendedName>
    <alternativeName>
        <fullName evidence="1">L-isoaspartyl protein carboxyl methyltransferase</fullName>
    </alternativeName>
    <alternativeName>
        <fullName evidence="1">Protein L-isoaspartyl methyltransferase</fullName>
    </alternativeName>
    <alternativeName>
        <fullName evidence="1">Protein-beta-aspartate methyltransferase</fullName>
        <shortName evidence="1">PIMT</shortName>
    </alternativeName>
</protein>
<accession>Q21LB7</accession>
<evidence type="ECO:0000255" key="1">
    <source>
        <dbReference type="HAMAP-Rule" id="MF_00090"/>
    </source>
</evidence>
<keyword id="KW-0963">Cytoplasm</keyword>
<keyword id="KW-0489">Methyltransferase</keyword>
<keyword id="KW-1185">Reference proteome</keyword>
<keyword id="KW-0949">S-adenosyl-L-methionine</keyword>
<keyword id="KW-0808">Transferase</keyword>
<proteinExistence type="inferred from homology"/>
<feature type="chain" id="PRO_0000351932" description="Protein-L-isoaspartate O-methyltransferase">
    <location>
        <begin position="1"/>
        <end position="223"/>
    </location>
</feature>
<feature type="active site" evidence="1">
    <location>
        <position position="70"/>
    </location>
</feature>
<sequence length="223" mass="24664">MDRLKLEGVGMTSKRTRDRLVERLLEQGVTSQFVLELIANTPRHLFLDEALSHRAYEDASLPIGFGQTLSQPYIVARMTEILLGAAGDPKRVLEIGTGSGYQTCILAQAVEHVWSVERIKPLQDKAKQRLRHLGLNNVTYKHADGGFGWPEQGPFDAILSAAAPRDIPKSLLQQLAHNGVLVIPVGADEQVLTLVIRDGEEDKFITQKLEPVKFVPLLSGVTR</sequence>
<dbReference type="EC" id="2.1.1.77" evidence="1"/>
<dbReference type="EMBL" id="CP000282">
    <property type="protein sequence ID" value="ABD80512.1"/>
    <property type="molecule type" value="Genomic_DNA"/>
</dbReference>
<dbReference type="SMR" id="Q21LB7"/>
<dbReference type="STRING" id="203122.Sde_1250"/>
<dbReference type="KEGG" id="sde:Sde_1250"/>
<dbReference type="eggNOG" id="COG2518">
    <property type="taxonomic scope" value="Bacteria"/>
</dbReference>
<dbReference type="HOGENOM" id="CLU_055432_2_0_6"/>
<dbReference type="Proteomes" id="UP000001947">
    <property type="component" value="Chromosome"/>
</dbReference>
<dbReference type="GO" id="GO:0005737">
    <property type="term" value="C:cytoplasm"/>
    <property type="evidence" value="ECO:0007669"/>
    <property type="project" value="UniProtKB-SubCell"/>
</dbReference>
<dbReference type="GO" id="GO:0004719">
    <property type="term" value="F:protein-L-isoaspartate (D-aspartate) O-methyltransferase activity"/>
    <property type="evidence" value="ECO:0007669"/>
    <property type="project" value="UniProtKB-UniRule"/>
</dbReference>
<dbReference type="GO" id="GO:0032259">
    <property type="term" value="P:methylation"/>
    <property type="evidence" value="ECO:0007669"/>
    <property type="project" value="UniProtKB-KW"/>
</dbReference>
<dbReference type="GO" id="GO:0036211">
    <property type="term" value="P:protein modification process"/>
    <property type="evidence" value="ECO:0007669"/>
    <property type="project" value="UniProtKB-UniRule"/>
</dbReference>
<dbReference type="GO" id="GO:0030091">
    <property type="term" value="P:protein repair"/>
    <property type="evidence" value="ECO:0007669"/>
    <property type="project" value="UniProtKB-UniRule"/>
</dbReference>
<dbReference type="CDD" id="cd02440">
    <property type="entry name" value="AdoMet_MTases"/>
    <property type="match status" value="1"/>
</dbReference>
<dbReference type="FunFam" id="3.40.50.150:FF:000010">
    <property type="entry name" value="Protein-L-isoaspartate O-methyltransferase"/>
    <property type="match status" value="1"/>
</dbReference>
<dbReference type="Gene3D" id="3.40.50.150">
    <property type="entry name" value="Vaccinia Virus protein VP39"/>
    <property type="match status" value="1"/>
</dbReference>
<dbReference type="HAMAP" id="MF_00090">
    <property type="entry name" value="PIMT"/>
    <property type="match status" value="1"/>
</dbReference>
<dbReference type="InterPro" id="IPR000682">
    <property type="entry name" value="PCMT"/>
</dbReference>
<dbReference type="InterPro" id="IPR029063">
    <property type="entry name" value="SAM-dependent_MTases_sf"/>
</dbReference>
<dbReference type="NCBIfam" id="TIGR00080">
    <property type="entry name" value="pimt"/>
    <property type="match status" value="1"/>
</dbReference>
<dbReference type="NCBIfam" id="NF001453">
    <property type="entry name" value="PRK00312.1"/>
    <property type="match status" value="1"/>
</dbReference>
<dbReference type="PANTHER" id="PTHR11579">
    <property type="entry name" value="PROTEIN-L-ISOASPARTATE O-METHYLTRANSFERASE"/>
    <property type="match status" value="1"/>
</dbReference>
<dbReference type="PANTHER" id="PTHR11579:SF0">
    <property type="entry name" value="PROTEIN-L-ISOASPARTATE(D-ASPARTATE) O-METHYLTRANSFERASE"/>
    <property type="match status" value="1"/>
</dbReference>
<dbReference type="Pfam" id="PF01135">
    <property type="entry name" value="PCMT"/>
    <property type="match status" value="1"/>
</dbReference>
<dbReference type="SUPFAM" id="SSF53335">
    <property type="entry name" value="S-adenosyl-L-methionine-dependent methyltransferases"/>
    <property type="match status" value="1"/>
</dbReference>
<dbReference type="PROSITE" id="PS01279">
    <property type="entry name" value="PCMT"/>
    <property type="match status" value="1"/>
</dbReference>
<name>PIMT_SACD2</name>